<feature type="chain" id="PRO_0000391225" description="NADH-quinone oxidoreductase subunit N 2">
    <location>
        <begin position="1"/>
        <end position="493"/>
    </location>
</feature>
<feature type="transmembrane region" description="Helical" evidence="1">
    <location>
        <begin position="16"/>
        <end position="36"/>
    </location>
</feature>
<feature type="transmembrane region" description="Helical" evidence="1">
    <location>
        <begin position="45"/>
        <end position="65"/>
    </location>
</feature>
<feature type="transmembrane region" description="Helical" evidence="1">
    <location>
        <begin position="87"/>
        <end position="107"/>
    </location>
</feature>
<feature type="transmembrane region" description="Helical" evidence="1">
    <location>
        <begin position="119"/>
        <end position="139"/>
    </location>
</feature>
<feature type="transmembrane region" description="Helical" evidence="1">
    <location>
        <begin position="141"/>
        <end position="161"/>
    </location>
</feature>
<feature type="transmembrane region" description="Helical" evidence="1">
    <location>
        <begin position="176"/>
        <end position="196"/>
    </location>
</feature>
<feature type="transmembrane region" description="Helical" evidence="1">
    <location>
        <begin position="219"/>
        <end position="239"/>
    </location>
</feature>
<feature type="transmembrane region" description="Helical" evidence="1">
    <location>
        <begin position="258"/>
        <end position="278"/>
    </location>
</feature>
<feature type="transmembrane region" description="Helical" evidence="1">
    <location>
        <begin position="285"/>
        <end position="305"/>
    </location>
</feature>
<feature type="transmembrane region" description="Helical" evidence="1">
    <location>
        <begin position="313"/>
        <end position="333"/>
    </location>
</feature>
<feature type="transmembrane region" description="Helical" evidence="1">
    <location>
        <begin position="340"/>
        <end position="360"/>
    </location>
</feature>
<feature type="transmembrane region" description="Helical" evidence="1">
    <location>
        <begin position="385"/>
        <end position="405"/>
    </location>
</feature>
<feature type="transmembrane region" description="Helical" evidence="1">
    <location>
        <begin position="421"/>
        <end position="441"/>
    </location>
</feature>
<feature type="transmembrane region" description="Helical" evidence="1">
    <location>
        <begin position="464"/>
        <end position="484"/>
    </location>
</feature>
<evidence type="ECO:0000255" key="1">
    <source>
        <dbReference type="HAMAP-Rule" id="MF_00445"/>
    </source>
</evidence>
<protein>
    <recommendedName>
        <fullName evidence="1">NADH-quinone oxidoreductase subunit N 2</fullName>
        <ecNumber evidence="1">7.1.1.-</ecNumber>
    </recommendedName>
    <alternativeName>
        <fullName evidence="1">NADH dehydrogenase I subunit N 2</fullName>
    </alternativeName>
    <alternativeName>
        <fullName evidence="1">NDH-1 subunit N 2</fullName>
    </alternativeName>
</protein>
<keyword id="KW-0997">Cell inner membrane</keyword>
<keyword id="KW-1003">Cell membrane</keyword>
<keyword id="KW-0472">Membrane</keyword>
<keyword id="KW-0520">NAD</keyword>
<keyword id="KW-0874">Quinone</keyword>
<keyword id="KW-1278">Translocase</keyword>
<keyword id="KW-0812">Transmembrane</keyword>
<keyword id="KW-1133">Transmembrane helix</keyword>
<keyword id="KW-0813">Transport</keyword>
<keyword id="KW-0830">Ubiquinone</keyword>
<sequence length="493" mass="53824">MIDFSLFYNSTDHFSIIPAVMLALFGCAILLFDFLIFPDPRQRKFLLIFVVLAEAFTGFGLFRQQAWLAAQNAPELSGFGGSVTVDGFAIFFNWIFLVAAVVVAIVSYKYLEISGEHHGEYYSLILFAQCGMYFLATGTDLITLFIGLELMALCFYVMVGFLRTERRSNEAALKYLLLGAFSSGFLVYGFSVMYGIAGSTKLSDIAAAIASRPPWDPMVFLALSTTSVGLLFKVSAVPFHMWAPDAYEGAPTTVTAYLSVASKAASIAFLLRIFLGPLASARAVWEPLLAFIAIITLTIGNLAAINQTNIKRLLAYSSISHAGYMLLGLVAGNDTGIKGIAVYVMVYTFMNLGAFLVIIAMRRASIIGEDLDDLAGLVHKSPGYAFLMLIFLLSLAGIPPTAGFLGKYYIFLALIQTGHTGLAIVATLYVAVAIYYYFKIVRSMFIREEMEKTPMLATSFGLRCALALTGIATLAIGIYPEPFLRLAQTSLFR</sequence>
<proteinExistence type="inferred from homology"/>
<dbReference type="EC" id="7.1.1.-" evidence="1"/>
<dbReference type="EMBL" id="CP000473">
    <property type="protein sequence ID" value="ABJ86637.1"/>
    <property type="molecule type" value="Genomic_DNA"/>
</dbReference>
<dbReference type="SMR" id="Q01UN3"/>
<dbReference type="FunCoup" id="Q01UN3">
    <property type="interactions" value="190"/>
</dbReference>
<dbReference type="STRING" id="234267.Acid_5690"/>
<dbReference type="KEGG" id="sus:Acid_5690"/>
<dbReference type="eggNOG" id="COG1007">
    <property type="taxonomic scope" value="Bacteria"/>
</dbReference>
<dbReference type="HOGENOM" id="CLU_007100_1_5_0"/>
<dbReference type="InParanoid" id="Q01UN3"/>
<dbReference type="OrthoDB" id="9807568at2"/>
<dbReference type="GO" id="GO:0005886">
    <property type="term" value="C:plasma membrane"/>
    <property type="evidence" value="ECO:0007669"/>
    <property type="project" value="UniProtKB-SubCell"/>
</dbReference>
<dbReference type="GO" id="GO:0008137">
    <property type="term" value="F:NADH dehydrogenase (ubiquinone) activity"/>
    <property type="evidence" value="ECO:0007669"/>
    <property type="project" value="InterPro"/>
</dbReference>
<dbReference type="GO" id="GO:0050136">
    <property type="term" value="F:NADH:ubiquinone reductase (non-electrogenic) activity"/>
    <property type="evidence" value="ECO:0007669"/>
    <property type="project" value="UniProtKB-UniRule"/>
</dbReference>
<dbReference type="GO" id="GO:0048038">
    <property type="term" value="F:quinone binding"/>
    <property type="evidence" value="ECO:0007669"/>
    <property type="project" value="UniProtKB-KW"/>
</dbReference>
<dbReference type="GO" id="GO:0042773">
    <property type="term" value="P:ATP synthesis coupled electron transport"/>
    <property type="evidence" value="ECO:0007669"/>
    <property type="project" value="InterPro"/>
</dbReference>
<dbReference type="HAMAP" id="MF_00445">
    <property type="entry name" value="NDH1_NuoN_1"/>
    <property type="match status" value="1"/>
</dbReference>
<dbReference type="InterPro" id="IPR010096">
    <property type="entry name" value="NADH-Q_OxRdtase_suN/2"/>
</dbReference>
<dbReference type="InterPro" id="IPR001750">
    <property type="entry name" value="ND/Mrp_TM"/>
</dbReference>
<dbReference type="NCBIfam" id="TIGR01770">
    <property type="entry name" value="NDH_I_N"/>
    <property type="match status" value="1"/>
</dbReference>
<dbReference type="PANTHER" id="PTHR22773">
    <property type="entry name" value="NADH DEHYDROGENASE"/>
    <property type="match status" value="1"/>
</dbReference>
<dbReference type="Pfam" id="PF00361">
    <property type="entry name" value="Proton_antipo_M"/>
    <property type="match status" value="1"/>
</dbReference>
<dbReference type="PRINTS" id="PR01434">
    <property type="entry name" value="NADHDHGNASE5"/>
</dbReference>
<reference key="1">
    <citation type="journal article" date="2009" name="Appl. Environ. Microbiol.">
        <title>Three genomes from the phylum Acidobacteria provide insight into the lifestyles of these microorganisms in soils.</title>
        <authorList>
            <person name="Ward N.L."/>
            <person name="Challacombe J.F."/>
            <person name="Janssen P.H."/>
            <person name="Henrissat B."/>
            <person name="Coutinho P.M."/>
            <person name="Wu M."/>
            <person name="Xie G."/>
            <person name="Haft D.H."/>
            <person name="Sait M."/>
            <person name="Badger J."/>
            <person name="Barabote R.D."/>
            <person name="Bradley B."/>
            <person name="Brettin T.S."/>
            <person name="Brinkac L.M."/>
            <person name="Bruce D."/>
            <person name="Creasy T."/>
            <person name="Daugherty S.C."/>
            <person name="Davidsen T.M."/>
            <person name="DeBoy R.T."/>
            <person name="Detter J.C."/>
            <person name="Dodson R.J."/>
            <person name="Durkin A.S."/>
            <person name="Ganapathy A."/>
            <person name="Gwinn-Giglio M."/>
            <person name="Han C.S."/>
            <person name="Khouri H."/>
            <person name="Kiss H."/>
            <person name="Kothari S.P."/>
            <person name="Madupu R."/>
            <person name="Nelson K.E."/>
            <person name="Nelson W.C."/>
            <person name="Paulsen I."/>
            <person name="Penn K."/>
            <person name="Ren Q."/>
            <person name="Rosovitz M.J."/>
            <person name="Selengut J.D."/>
            <person name="Shrivastava S."/>
            <person name="Sullivan S.A."/>
            <person name="Tapia R."/>
            <person name="Thompson L.S."/>
            <person name="Watkins K.L."/>
            <person name="Yang Q."/>
            <person name="Yu C."/>
            <person name="Zafar N."/>
            <person name="Zhou L."/>
            <person name="Kuske C.R."/>
        </authorList>
    </citation>
    <scope>NUCLEOTIDE SEQUENCE [LARGE SCALE GENOMIC DNA]</scope>
    <source>
        <strain>Ellin6076</strain>
    </source>
</reference>
<accession>Q01UN3</accession>
<name>NUON2_SOLUE</name>
<gene>
    <name evidence="1" type="primary">nuoN2</name>
    <name type="ordered locus">Acid_5690</name>
</gene>
<organism>
    <name type="scientific">Solibacter usitatus (strain Ellin6076)</name>
    <dbReference type="NCBI Taxonomy" id="234267"/>
    <lineage>
        <taxon>Bacteria</taxon>
        <taxon>Pseudomonadati</taxon>
        <taxon>Acidobacteriota</taxon>
        <taxon>Terriglobia</taxon>
        <taxon>Bryobacterales</taxon>
        <taxon>Solibacteraceae</taxon>
        <taxon>Candidatus Solibacter</taxon>
    </lineage>
</organism>
<comment type="function">
    <text evidence="1">NDH-1 shuttles electrons from NADH, via FMN and iron-sulfur (Fe-S) centers, to quinones in the respiratory chain. The immediate electron acceptor for the enzyme in this species is believed to be ubiquinone. Couples the redox reaction to proton translocation (for every two electrons transferred, four hydrogen ions are translocated across the cytoplasmic membrane), and thus conserves the redox energy in a proton gradient.</text>
</comment>
<comment type="catalytic activity">
    <reaction evidence="1">
        <text>a quinone + NADH + 5 H(+)(in) = a quinol + NAD(+) + 4 H(+)(out)</text>
        <dbReference type="Rhea" id="RHEA:57888"/>
        <dbReference type="ChEBI" id="CHEBI:15378"/>
        <dbReference type="ChEBI" id="CHEBI:24646"/>
        <dbReference type="ChEBI" id="CHEBI:57540"/>
        <dbReference type="ChEBI" id="CHEBI:57945"/>
        <dbReference type="ChEBI" id="CHEBI:132124"/>
    </reaction>
</comment>
<comment type="subunit">
    <text evidence="1">NDH-1 is composed of 14 different subunits. Subunits NuoA, H, J, K, L, M, N constitute the membrane sector of the complex.</text>
</comment>
<comment type="subcellular location">
    <subcellularLocation>
        <location evidence="1">Cell inner membrane</location>
        <topology evidence="1">Multi-pass membrane protein</topology>
    </subcellularLocation>
</comment>
<comment type="similarity">
    <text evidence="1">Belongs to the complex I subunit 2 family.</text>
</comment>